<keyword id="KW-0021">Allosteric enzyme</keyword>
<keyword id="KW-0328">Glycosyltransferase</keyword>
<keyword id="KW-0342">GTP-binding</keyword>
<keyword id="KW-0460">Magnesium</keyword>
<keyword id="KW-0547">Nucleotide-binding</keyword>
<keyword id="KW-0808">Transferase</keyword>
<gene>
    <name evidence="1" type="primary">upp</name>
    <name type="ordered locus">CPR_2172</name>
</gene>
<feature type="chain" id="PRO_1000053708" description="Uracil phosphoribosyltransferase">
    <location>
        <begin position="1"/>
        <end position="209"/>
    </location>
</feature>
<feature type="binding site" evidence="1">
    <location>
        <position position="79"/>
    </location>
    <ligand>
        <name>5-phospho-alpha-D-ribose 1-diphosphate</name>
        <dbReference type="ChEBI" id="CHEBI:58017"/>
    </ligand>
</feature>
<feature type="binding site" evidence="1">
    <location>
        <position position="104"/>
    </location>
    <ligand>
        <name>5-phospho-alpha-D-ribose 1-diphosphate</name>
        <dbReference type="ChEBI" id="CHEBI:58017"/>
    </ligand>
</feature>
<feature type="binding site" evidence="1">
    <location>
        <begin position="131"/>
        <end position="139"/>
    </location>
    <ligand>
        <name>5-phospho-alpha-D-ribose 1-diphosphate</name>
        <dbReference type="ChEBI" id="CHEBI:58017"/>
    </ligand>
</feature>
<feature type="binding site" evidence="1">
    <location>
        <position position="194"/>
    </location>
    <ligand>
        <name>uracil</name>
        <dbReference type="ChEBI" id="CHEBI:17568"/>
    </ligand>
</feature>
<feature type="binding site" evidence="1">
    <location>
        <begin position="199"/>
        <end position="201"/>
    </location>
    <ligand>
        <name>uracil</name>
        <dbReference type="ChEBI" id="CHEBI:17568"/>
    </ligand>
</feature>
<feature type="binding site" evidence="1">
    <location>
        <position position="200"/>
    </location>
    <ligand>
        <name>5-phospho-alpha-D-ribose 1-diphosphate</name>
        <dbReference type="ChEBI" id="CHEBI:58017"/>
    </ligand>
</feature>
<evidence type="ECO:0000255" key="1">
    <source>
        <dbReference type="HAMAP-Rule" id="MF_01218"/>
    </source>
</evidence>
<dbReference type="EC" id="2.4.2.9" evidence="1"/>
<dbReference type="EMBL" id="CP000312">
    <property type="protein sequence ID" value="ABG87359.1"/>
    <property type="molecule type" value="Genomic_DNA"/>
</dbReference>
<dbReference type="RefSeq" id="WP_011592990.1">
    <property type="nucleotide sequence ID" value="NC_008262.1"/>
</dbReference>
<dbReference type="SMR" id="Q0SQY5"/>
<dbReference type="KEGG" id="cpr:CPR_2172"/>
<dbReference type="UniPathway" id="UPA00574">
    <property type="reaction ID" value="UER00636"/>
</dbReference>
<dbReference type="Proteomes" id="UP000001824">
    <property type="component" value="Chromosome"/>
</dbReference>
<dbReference type="GO" id="GO:0005525">
    <property type="term" value="F:GTP binding"/>
    <property type="evidence" value="ECO:0007669"/>
    <property type="project" value="UniProtKB-KW"/>
</dbReference>
<dbReference type="GO" id="GO:0000287">
    <property type="term" value="F:magnesium ion binding"/>
    <property type="evidence" value="ECO:0007669"/>
    <property type="project" value="UniProtKB-UniRule"/>
</dbReference>
<dbReference type="GO" id="GO:0004845">
    <property type="term" value="F:uracil phosphoribosyltransferase activity"/>
    <property type="evidence" value="ECO:0007669"/>
    <property type="project" value="UniProtKB-UniRule"/>
</dbReference>
<dbReference type="GO" id="GO:0044206">
    <property type="term" value="P:UMP salvage"/>
    <property type="evidence" value="ECO:0007669"/>
    <property type="project" value="UniProtKB-UniRule"/>
</dbReference>
<dbReference type="GO" id="GO:0006223">
    <property type="term" value="P:uracil salvage"/>
    <property type="evidence" value="ECO:0007669"/>
    <property type="project" value="InterPro"/>
</dbReference>
<dbReference type="CDD" id="cd06223">
    <property type="entry name" value="PRTases_typeI"/>
    <property type="match status" value="1"/>
</dbReference>
<dbReference type="FunFam" id="3.40.50.2020:FF:000003">
    <property type="entry name" value="Uracil phosphoribosyltransferase"/>
    <property type="match status" value="1"/>
</dbReference>
<dbReference type="Gene3D" id="3.40.50.2020">
    <property type="match status" value="1"/>
</dbReference>
<dbReference type="HAMAP" id="MF_01218_B">
    <property type="entry name" value="Upp_B"/>
    <property type="match status" value="1"/>
</dbReference>
<dbReference type="InterPro" id="IPR000836">
    <property type="entry name" value="PRibTrfase_dom"/>
</dbReference>
<dbReference type="InterPro" id="IPR029057">
    <property type="entry name" value="PRTase-like"/>
</dbReference>
<dbReference type="InterPro" id="IPR034332">
    <property type="entry name" value="Upp_B"/>
</dbReference>
<dbReference type="InterPro" id="IPR050054">
    <property type="entry name" value="UPRTase/APRTase"/>
</dbReference>
<dbReference type="InterPro" id="IPR005765">
    <property type="entry name" value="Ura_phspho_trans"/>
</dbReference>
<dbReference type="NCBIfam" id="NF001097">
    <property type="entry name" value="PRK00129.1"/>
    <property type="match status" value="1"/>
</dbReference>
<dbReference type="NCBIfam" id="TIGR01091">
    <property type="entry name" value="upp"/>
    <property type="match status" value="1"/>
</dbReference>
<dbReference type="PANTHER" id="PTHR32315">
    <property type="entry name" value="ADENINE PHOSPHORIBOSYLTRANSFERASE"/>
    <property type="match status" value="1"/>
</dbReference>
<dbReference type="PANTHER" id="PTHR32315:SF4">
    <property type="entry name" value="URACIL PHOSPHORIBOSYLTRANSFERASE, CHLOROPLASTIC"/>
    <property type="match status" value="1"/>
</dbReference>
<dbReference type="Pfam" id="PF14681">
    <property type="entry name" value="UPRTase"/>
    <property type="match status" value="1"/>
</dbReference>
<dbReference type="SUPFAM" id="SSF53271">
    <property type="entry name" value="PRTase-like"/>
    <property type="match status" value="1"/>
</dbReference>
<reference key="1">
    <citation type="journal article" date="2006" name="Genome Res.">
        <title>Skewed genomic variability in strains of the toxigenic bacterial pathogen, Clostridium perfringens.</title>
        <authorList>
            <person name="Myers G.S.A."/>
            <person name="Rasko D.A."/>
            <person name="Cheung J.K."/>
            <person name="Ravel J."/>
            <person name="Seshadri R."/>
            <person name="DeBoy R.T."/>
            <person name="Ren Q."/>
            <person name="Varga J."/>
            <person name="Awad M.M."/>
            <person name="Brinkac L.M."/>
            <person name="Daugherty S.C."/>
            <person name="Haft D.H."/>
            <person name="Dodson R.J."/>
            <person name="Madupu R."/>
            <person name="Nelson W.C."/>
            <person name="Rosovitz M.J."/>
            <person name="Sullivan S.A."/>
            <person name="Khouri H."/>
            <person name="Dimitrov G.I."/>
            <person name="Watkins K.L."/>
            <person name="Mulligan S."/>
            <person name="Benton J."/>
            <person name="Radune D."/>
            <person name="Fisher D.J."/>
            <person name="Atkins H.S."/>
            <person name="Hiscox T."/>
            <person name="Jost B.H."/>
            <person name="Billington S.J."/>
            <person name="Songer J.G."/>
            <person name="McClane B.A."/>
            <person name="Titball R.W."/>
            <person name="Rood J.I."/>
            <person name="Melville S.B."/>
            <person name="Paulsen I.T."/>
        </authorList>
    </citation>
    <scope>NUCLEOTIDE SEQUENCE [LARGE SCALE GENOMIC DNA]</scope>
    <source>
        <strain>SM101 / Type A</strain>
    </source>
</reference>
<protein>
    <recommendedName>
        <fullName evidence="1">Uracil phosphoribosyltransferase</fullName>
        <ecNumber evidence="1">2.4.2.9</ecNumber>
    </recommendedName>
    <alternativeName>
        <fullName evidence="1">UMP pyrophosphorylase</fullName>
    </alternativeName>
    <alternativeName>
        <fullName evidence="1">UPRTase</fullName>
    </alternativeName>
</protein>
<comment type="function">
    <text evidence="1">Catalyzes the conversion of uracil and 5-phospho-alpha-D-ribose 1-diphosphate (PRPP) to UMP and diphosphate.</text>
</comment>
<comment type="catalytic activity">
    <reaction evidence="1">
        <text>UMP + diphosphate = 5-phospho-alpha-D-ribose 1-diphosphate + uracil</text>
        <dbReference type="Rhea" id="RHEA:13017"/>
        <dbReference type="ChEBI" id="CHEBI:17568"/>
        <dbReference type="ChEBI" id="CHEBI:33019"/>
        <dbReference type="ChEBI" id="CHEBI:57865"/>
        <dbReference type="ChEBI" id="CHEBI:58017"/>
        <dbReference type="EC" id="2.4.2.9"/>
    </reaction>
</comment>
<comment type="cofactor">
    <cofactor evidence="1">
        <name>Mg(2+)</name>
        <dbReference type="ChEBI" id="CHEBI:18420"/>
    </cofactor>
    <text evidence="1">Binds 1 Mg(2+) ion per subunit. The magnesium is bound as Mg-PRPP.</text>
</comment>
<comment type="activity regulation">
    <text evidence="1">Allosterically activated by GTP.</text>
</comment>
<comment type="pathway">
    <text evidence="1">Pyrimidine metabolism; UMP biosynthesis via salvage pathway; UMP from uracil: step 1/1.</text>
</comment>
<comment type="similarity">
    <text evidence="1">Belongs to the UPRTase family.</text>
</comment>
<sequence>MSKVTEITHPLILHKLAFIRDKNTGSKDFRELVSEVSMLMAYEVTRNLPMEEIEIETPVCKTKCKVLAGKKVAIVPILRAGLGMVDGMLQLIPAAKVGHIGLYRDEETLQPVEYFCKLPQDIAERDIIVVDPMLATGGSATDAITLLKKRGAKQIRLMCLISSPEGIEFVQKAHPDVDIYVACIDEKLNDHGYIVPGLGDAGDRLFGTK</sequence>
<organism>
    <name type="scientific">Clostridium perfringens (strain SM101 / Type A)</name>
    <dbReference type="NCBI Taxonomy" id="289380"/>
    <lineage>
        <taxon>Bacteria</taxon>
        <taxon>Bacillati</taxon>
        <taxon>Bacillota</taxon>
        <taxon>Clostridia</taxon>
        <taxon>Eubacteriales</taxon>
        <taxon>Clostridiaceae</taxon>
        <taxon>Clostridium</taxon>
    </lineage>
</organism>
<name>UPP_CLOPS</name>
<proteinExistence type="inferred from homology"/>
<accession>Q0SQY5</accession>